<gene>
    <name type="primary">uidC</name>
    <name type="synonym">gusC</name>
    <name type="ordered locus">b1615</name>
    <name type="ordered locus">JW1607</name>
</gene>
<sequence>MRKIVAMAVICLTAASGLTSAYAAQLADDEAGLRIRLKNELRRADKPSAGAGRDIYAWVQGGLLDFNSGYYSNIIGVEGGAYYVYKLGARADMSTRWYLDGDKSFGFALGAVKIKPSENSLLKLGRFGTDYSYGSLPYRIPLMAGSSQRTLPTVSEGALGYWALTPNIDLWGMWRSRVFLWTDSTTGIRDEGVYNSQTGKYDKHRARSFLAASWHDDTSRYSLGASVQKDVSNQIQSILEKSIPLDPNYTLKGELLGFYAQLEGLSRNTSQPNETALVSGQLTWNAPWGSVFGSGGYLRHAMNGAVVDTDIGYPFSLSLDRNREGMQSWQLGVNYRLTPQFTLTFAPIVTRGYESSKRDVRIEGTGILGGMNYRVSEGPLQGMNFFLAADKGREKRDGSTLGDRLNYWDVKMSIQYDFMLK</sequence>
<feature type="signal peptide" evidence="1">
    <location>
        <begin position="1"/>
        <end position="23"/>
    </location>
</feature>
<feature type="chain" id="PRO_0000022625" description="Membrane-associated protein UidC">
    <location>
        <begin position="24"/>
        <end position="421"/>
    </location>
</feature>
<feature type="sequence conflict" description="In Ref. 1; AAA68925." evidence="2" ref="1">
    <original>GFAL</original>
    <variation>ALP</variation>
    <location>
        <begin position="106"/>
        <end position="109"/>
    </location>
</feature>
<keyword id="KW-0998">Cell outer membrane</keyword>
<keyword id="KW-0903">Direct protein sequencing</keyword>
<keyword id="KW-0406">Ion transport</keyword>
<keyword id="KW-0472">Membrane</keyword>
<keyword id="KW-0626">Porin</keyword>
<keyword id="KW-1185">Reference proteome</keyword>
<keyword id="KW-0732">Signal</keyword>
<keyword id="KW-0762">Sugar transport</keyword>
<keyword id="KW-0812">Transmembrane</keyword>
<keyword id="KW-1134">Transmembrane beta strand</keyword>
<keyword id="KW-0813">Transport</keyword>
<reference key="1">
    <citation type="submission" date="1994-10" db="EMBL/GenBank/DDBJ databases">
        <title>The gus genes of Escherichia coli.</title>
        <authorList>
            <person name="Liang W.J."/>
            <person name="Wilson K.J."/>
            <person name="Jefferson R.A."/>
        </authorList>
    </citation>
    <scope>NUCLEOTIDE SEQUENCE [GENOMIC DNA]</scope>
    <source>
        <strain>K12</strain>
    </source>
</reference>
<reference key="2">
    <citation type="journal article" date="1997" name="Science">
        <title>The complete genome sequence of Escherichia coli K-12.</title>
        <authorList>
            <person name="Blattner F.R."/>
            <person name="Plunkett G. III"/>
            <person name="Bloch C.A."/>
            <person name="Perna N.T."/>
            <person name="Burland V."/>
            <person name="Riley M."/>
            <person name="Collado-Vides J."/>
            <person name="Glasner J.D."/>
            <person name="Rode C.K."/>
            <person name="Mayhew G.F."/>
            <person name="Gregor J."/>
            <person name="Davis N.W."/>
            <person name="Kirkpatrick H.A."/>
            <person name="Goeden M.A."/>
            <person name="Rose D.J."/>
            <person name="Mau B."/>
            <person name="Shao Y."/>
        </authorList>
    </citation>
    <scope>NUCLEOTIDE SEQUENCE [LARGE SCALE GENOMIC DNA]</scope>
    <source>
        <strain>K12 / MG1655 / ATCC 47076</strain>
    </source>
</reference>
<reference key="3">
    <citation type="journal article" date="2006" name="Mol. Syst. Biol.">
        <title>Highly accurate genome sequences of Escherichia coli K-12 strains MG1655 and W3110.</title>
        <authorList>
            <person name="Hayashi K."/>
            <person name="Morooka N."/>
            <person name="Yamamoto Y."/>
            <person name="Fujita K."/>
            <person name="Isono K."/>
            <person name="Choi S."/>
            <person name="Ohtsubo E."/>
            <person name="Baba T."/>
            <person name="Wanner B.L."/>
            <person name="Mori H."/>
            <person name="Horiuchi T."/>
        </authorList>
    </citation>
    <scope>NUCLEOTIDE SEQUENCE [LARGE SCALE GENOMIC DNA]</scope>
    <source>
        <strain>K12 / W3110 / ATCC 27325 / DSM 5911</strain>
    </source>
</reference>
<reference key="4">
    <citation type="journal article" date="2005" name="J. Bacteriol.">
        <title>The gusBC genes of Escherichia coli encode a glucuronide transport system.</title>
        <authorList>
            <person name="Liang W.-J."/>
            <person name="Wilson K.J."/>
            <person name="Xie H."/>
            <person name="Knol J."/>
            <person name="Suzuki S."/>
            <person name="Rutherford N.G."/>
            <person name="Henderson P.J.F."/>
            <person name="Jefferson R.A."/>
        </authorList>
    </citation>
    <scope>PROTEIN SEQUENCE OF 24-43</scope>
    <scope>CHARACTERIZATION</scope>
    <scope>FUNCTION</scope>
    <scope>INDUCTION</scope>
    <scope>LACK OF TRANSPORT IN K12</scope>
    <scope>SUBCELLULAR LOCATION</scope>
    <source>
        <strain>CE1</strain>
    </source>
</reference>
<proteinExistence type="evidence at protein level"/>
<name>UIDC_ECOLI</name>
<comment type="function">
    <text evidence="1">Enhances the activity of the UidB (GusB) glucuronide transporter, on its own however it has no transport activity. Glucuronide transport does not occur in strain K12 due to a variant at position 100 of the UidB (GusB, AC P0CE44, AC P0CE45) protein.</text>
</comment>
<comment type="subcellular location">
    <subcellularLocation>
        <location evidence="1">Cell outer membrane</location>
    </subcellularLocation>
</comment>
<comment type="induction">
    <text evidence="1">In the presence of glucuronides.</text>
</comment>
<comment type="similarity">
    <text evidence="2">Belongs to the outer membrane porin (Opr) (TC 1.B.25) family.</text>
</comment>
<comment type="sequence caution" evidence="2">
    <conflict type="erroneous initiation">
        <sequence resource="EMBL-CDS" id="AAA68925"/>
    </conflict>
    <text>Truncated N-terminus.</text>
</comment>
<evidence type="ECO:0000269" key="1">
    <source>
    </source>
</evidence>
<evidence type="ECO:0000305" key="2"/>
<organism>
    <name type="scientific">Escherichia coli (strain K12)</name>
    <dbReference type="NCBI Taxonomy" id="83333"/>
    <lineage>
        <taxon>Bacteria</taxon>
        <taxon>Pseudomonadati</taxon>
        <taxon>Pseudomonadota</taxon>
        <taxon>Gammaproteobacteria</taxon>
        <taxon>Enterobacterales</taxon>
        <taxon>Enterobacteriaceae</taxon>
        <taxon>Escherichia</taxon>
    </lineage>
</organism>
<accession>Q47706</accession>
<accession>P76178</accession>
<accession>Q2MB74</accession>
<protein>
    <recommendedName>
        <fullName>Membrane-associated protein UidC</fullName>
    </recommendedName>
</protein>
<dbReference type="EMBL" id="M14641">
    <property type="protein sequence ID" value="AAA68925.1"/>
    <property type="status" value="ALT_INIT"/>
    <property type="molecule type" value="Genomic_DNA"/>
</dbReference>
<dbReference type="EMBL" id="U00096">
    <property type="protein sequence ID" value="AAC74687.2"/>
    <property type="molecule type" value="Genomic_DNA"/>
</dbReference>
<dbReference type="EMBL" id="AP009048">
    <property type="protein sequence ID" value="BAE76482.1"/>
    <property type="molecule type" value="Genomic_DNA"/>
</dbReference>
<dbReference type="PIR" id="A64918">
    <property type="entry name" value="A64918"/>
</dbReference>
<dbReference type="RefSeq" id="NP_416132.2">
    <property type="nucleotide sequence ID" value="NC_000913.3"/>
</dbReference>
<dbReference type="RefSeq" id="WP_001227023.1">
    <property type="nucleotide sequence ID" value="NZ_LN832404.1"/>
</dbReference>
<dbReference type="SMR" id="Q47706"/>
<dbReference type="BioGRID" id="4261073">
    <property type="interactions" value="184"/>
</dbReference>
<dbReference type="DIP" id="DIP-11088N"/>
<dbReference type="FunCoup" id="Q47706">
    <property type="interactions" value="92"/>
</dbReference>
<dbReference type="IntAct" id="Q47706">
    <property type="interactions" value="6"/>
</dbReference>
<dbReference type="STRING" id="511145.b1615"/>
<dbReference type="TCDB" id="1.B.25.1.5">
    <property type="family name" value="the outer membrane porin (opr) family"/>
</dbReference>
<dbReference type="PaxDb" id="511145-b1615"/>
<dbReference type="EnsemblBacteria" id="AAC74687">
    <property type="protein sequence ID" value="AAC74687"/>
    <property type="gene ID" value="b1615"/>
</dbReference>
<dbReference type="GeneID" id="944820"/>
<dbReference type="KEGG" id="ecj:JW1607"/>
<dbReference type="KEGG" id="eco:b1615"/>
<dbReference type="KEGG" id="ecoc:C3026_09290"/>
<dbReference type="PATRIC" id="fig|1411691.4.peg.646"/>
<dbReference type="EchoBASE" id="EB2534"/>
<dbReference type="eggNOG" id="ENOG502ZARH">
    <property type="taxonomic scope" value="Bacteria"/>
</dbReference>
<dbReference type="HOGENOM" id="CLU_055413_0_0_6"/>
<dbReference type="InParanoid" id="Q47706"/>
<dbReference type="OMA" id="GAMGQFA"/>
<dbReference type="OrthoDB" id="5864637at2"/>
<dbReference type="BioCyc" id="EcoCyc:G6866-MONOMER"/>
<dbReference type="PRO" id="PR:Q47706"/>
<dbReference type="Proteomes" id="UP000000625">
    <property type="component" value="Chromosome"/>
</dbReference>
<dbReference type="GO" id="GO:0009279">
    <property type="term" value="C:cell outer membrane"/>
    <property type="evidence" value="ECO:0000314"/>
    <property type="project" value="EcoCyc"/>
</dbReference>
<dbReference type="GO" id="GO:0046930">
    <property type="term" value="C:pore complex"/>
    <property type="evidence" value="ECO:0007669"/>
    <property type="project" value="UniProtKB-KW"/>
</dbReference>
<dbReference type="GO" id="GO:0015288">
    <property type="term" value="F:porin activity"/>
    <property type="evidence" value="ECO:0007669"/>
    <property type="project" value="UniProtKB-KW"/>
</dbReference>
<dbReference type="GO" id="GO:0006811">
    <property type="term" value="P:monoatomic ion transport"/>
    <property type="evidence" value="ECO:0007669"/>
    <property type="project" value="UniProtKB-KW"/>
</dbReference>
<dbReference type="FunFam" id="2.40.160.10:FF:000017">
    <property type="entry name" value="Glucuronide uptake porin UidC"/>
    <property type="match status" value="1"/>
</dbReference>
<dbReference type="Gene3D" id="2.40.160.10">
    <property type="entry name" value="Porin"/>
    <property type="match status" value="1"/>
</dbReference>
<dbReference type="InterPro" id="IPR005318">
    <property type="entry name" value="OM_porin_bac"/>
</dbReference>
<dbReference type="InterPro" id="IPR023614">
    <property type="entry name" value="Porin_dom_sf"/>
</dbReference>
<dbReference type="NCBIfam" id="NF008479">
    <property type="entry name" value="PRK11379.1"/>
    <property type="match status" value="1"/>
</dbReference>
<dbReference type="Pfam" id="PF03573">
    <property type="entry name" value="OprD"/>
    <property type="match status" value="1"/>
</dbReference>